<name>RIBA_CITK8</name>
<accession>A8AG83</accession>
<gene>
    <name evidence="1" type="primary">ribA</name>
    <name type="ordered locus">CKO_01360</name>
</gene>
<feature type="chain" id="PRO_1000040559" description="GTP cyclohydrolase-2">
    <location>
        <begin position="1"/>
        <end position="196"/>
    </location>
</feature>
<feature type="active site" description="Proton acceptor" evidence="1">
    <location>
        <position position="126"/>
    </location>
</feature>
<feature type="active site" description="Nucleophile" evidence="1">
    <location>
        <position position="128"/>
    </location>
</feature>
<feature type="binding site" evidence="1">
    <location>
        <begin position="49"/>
        <end position="53"/>
    </location>
    <ligand>
        <name>GTP</name>
        <dbReference type="ChEBI" id="CHEBI:37565"/>
    </ligand>
</feature>
<feature type="binding site" evidence="1">
    <location>
        <position position="54"/>
    </location>
    <ligand>
        <name>Zn(2+)</name>
        <dbReference type="ChEBI" id="CHEBI:29105"/>
        <note>catalytic</note>
    </ligand>
</feature>
<feature type="binding site" evidence="1">
    <location>
        <position position="65"/>
    </location>
    <ligand>
        <name>Zn(2+)</name>
        <dbReference type="ChEBI" id="CHEBI:29105"/>
        <note>catalytic</note>
    </ligand>
</feature>
<feature type="binding site" evidence="1">
    <location>
        <position position="67"/>
    </location>
    <ligand>
        <name>Zn(2+)</name>
        <dbReference type="ChEBI" id="CHEBI:29105"/>
        <note>catalytic</note>
    </ligand>
</feature>
<feature type="binding site" evidence="1">
    <location>
        <position position="70"/>
    </location>
    <ligand>
        <name>GTP</name>
        <dbReference type="ChEBI" id="CHEBI:37565"/>
    </ligand>
</feature>
<feature type="binding site" evidence="1">
    <location>
        <begin position="92"/>
        <end position="94"/>
    </location>
    <ligand>
        <name>GTP</name>
        <dbReference type="ChEBI" id="CHEBI:37565"/>
    </ligand>
</feature>
<feature type="binding site" evidence="1">
    <location>
        <position position="114"/>
    </location>
    <ligand>
        <name>GTP</name>
        <dbReference type="ChEBI" id="CHEBI:37565"/>
    </ligand>
</feature>
<feature type="binding site" evidence="1">
    <location>
        <position position="149"/>
    </location>
    <ligand>
        <name>GTP</name>
        <dbReference type="ChEBI" id="CHEBI:37565"/>
    </ligand>
</feature>
<feature type="binding site" evidence="1">
    <location>
        <position position="154"/>
    </location>
    <ligand>
        <name>GTP</name>
        <dbReference type="ChEBI" id="CHEBI:37565"/>
    </ligand>
</feature>
<keyword id="KW-0342">GTP-binding</keyword>
<keyword id="KW-0378">Hydrolase</keyword>
<keyword id="KW-0479">Metal-binding</keyword>
<keyword id="KW-0547">Nucleotide-binding</keyword>
<keyword id="KW-1185">Reference proteome</keyword>
<keyword id="KW-0686">Riboflavin biosynthesis</keyword>
<keyword id="KW-0862">Zinc</keyword>
<proteinExistence type="inferred from homology"/>
<reference key="1">
    <citation type="submission" date="2007-08" db="EMBL/GenBank/DDBJ databases">
        <authorList>
            <consortium name="The Citrobacter koseri Genome Sequencing Project"/>
            <person name="McClelland M."/>
            <person name="Sanderson E.K."/>
            <person name="Porwollik S."/>
            <person name="Spieth J."/>
            <person name="Clifton W.S."/>
            <person name="Latreille P."/>
            <person name="Courtney L."/>
            <person name="Wang C."/>
            <person name="Pepin K."/>
            <person name="Bhonagiri V."/>
            <person name="Nash W."/>
            <person name="Johnson M."/>
            <person name="Thiruvilangam P."/>
            <person name="Wilson R."/>
        </authorList>
    </citation>
    <scope>NUCLEOTIDE SEQUENCE [LARGE SCALE GENOMIC DNA]</scope>
    <source>
        <strain>ATCC BAA-895 / CDC 4225-83 / SGSC4696</strain>
    </source>
</reference>
<dbReference type="EC" id="3.5.4.25" evidence="1"/>
<dbReference type="EMBL" id="CP000822">
    <property type="protein sequence ID" value="ABV12497.1"/>
    <property type="molecule type" value="Genomic_DNA"/>
</dbReference>
<dbReference type="RefSeq" id="WP_012132238.1">
    <property type="nucleotide sequence ID" value="NC_009792.1"/>
</dbReference>
<dbReference type="SMR" id="A8AG83"/>
<dbReference type="STRING" id="290338.CKO_01360"/>
<dbReference type="GeneID" id="45135458"/>
<dbReference type="KEGG" id="cko:CKO_01360"/>
<dbReference type="HOGENOM" id="CLU_020273_2_1_6"/>
<dbReference type="OrthoDB" id="9793111at2"/>
<dbReference type="UniPathway" id="UPA00275">
    <property type="reaction ID" value="UER00400"/>
</dbReference>
<dbReference type="Proteomes" id="UP000008148">
    <property type="component" value="Chromosome"/>
</dbReference>
<dbReference type="GO" id="GO:0005829">
    <property type="term" value="C:cytosol"/>
    <property type="evidence" value="ECO:0007669"/>
    <property type="project" value="TreeGrafter"/>
</dbReference>
<dbReference type="GO" id="GO:0005525">
    <property type="term" value="F:GTP binding"/>
    <property type="evidence" value="ECO:0007669"/>
    <property type="project" value="UniProtKB-KW"/>
</dbReference>
<dbReference type="GO" id="GO:0003935">
    <property type="term" value="F:GTP cyclohydrolase II activity"/>
    <property type="evidence" value="ECO:0007669"/>
    <property type="project" value="UniProtKB-UniRule"/>
</dbReference>
<dbReference type="GO" id="GO:0008270">
    <property type="term" value="F:zinc ion binding"/>
    <property type="evidence" value="ECO:0007669"/>
    <property type="project" value="UniProtKB-UniRule"/>
</dbReference>
<dbReference type="GO" id="GO:0009231">
    <property type="term" value="P:riboflavin biosynthetic process"/>
    <property type="evidence" value="ECO:0007669"/>
    <property type="project" value="UniProtKB-UniRule"/>
</dbReference>
<dbReference type="CDD" id="cd00641">
    <property type="entry name" value="GTP_cyclohydro2"/>
    <property type="match status" value="1"/>
</dbReference>
<dbReference type="FunFam" id="3.40.50.10990:FF:000002">
    <property type="entry name" value="GTP cyclohydrolase-2"/>
    <property type="match status" value="1"/>
</dbReference>
<dbReference type="Gene3D" id="3.40.50.10990">
    <property type="entry name" value="GTP cyclohydrolase II"/>
    <property type="match status" value="1"/>
</dbReference>
<dbReference type="HAMAP" id="MF_00179">
    <property type="entry name" value="RibA"/>
    <property type="match status" value="1"/>
</dbReference>
<dbReference type="InterPro" id="IPR032677">
    <property type="entry name" value="GTP_cyclohydro_II"/>
</dbReference>
<dbReference type="InterPro" id="IPR000926">
    <property type="entry name" value="RibA"/>
</dbReference>
<dbReference type="InterPro" id="IPR036144">
    <property type="entry name" value="RibA-like_sf"/>
</dbReference>
<dbReference type="NCBIfam" id="NF001591">
    <property type="entry name" value="PRK00393.1"/>
    <property type="match status" value="1"/>
</dbReference>
<dbReference type="NCBIfam" id="TIGR00505">
    <property type="entry name" value="ribA"/>
    <property type="match status" value="1"/>
</dbReference>
<dbReference type="PANTHER" id="PTHR21327:SF18">
    <property type="entry name" value="3,4-DIHYDROXY-2-BUTANONE 4-PHOSPHATE SYNTHASE"/>
    <property type="match status" value="1"/>
</dbReference>
<dbReference type="PANTHER" id="PTHR21327">
    <property type="entry name" value="GTP CYCLOHYDROLASE II-RELATED"/>
    <property type="match status" value="1"/>
</dbReference>
<dbReference type="Pfam" id="PF00925">
    <property type="entry name" value="GTP_cyclohydro2"/>
    <property type="match status" value="1"/>
</dbReference>
<dbReference type="SUPFAM" id="SSF142695">
    <property type="entry name" value="RibA-like"/>
    <property type="match status" value="1"/>
</dbReference>
<evidence type="ECO:0000255" key="1">
    <source>
        <dbReference type="HAMAP-Rule" id="MF_00179"/>
    </source>
</evidence>
<sequence>MQLKRVAEAKLPTPWGDFLMVGFEELATGHDHVALVYGDISGQTPVLARVHSECLTGDALFSLRCDCGFQLEAALTHIAEEGRGILLYHRQEGRNIGLLNKIRAYALQDQGYDTVEANHQLGFAADERDFTLCADMFKLLGVDEVRLLTNNPKKVEILTEAGINIVERVPLIVGRNPNNEHYLDTKAAKMGHLLGK</sequence>
<comment type="function">
    <text evidence="1">Catalyzes the conversion of GTP to 2,5-diamino-6-ribosylamino-4(3H)-pyrimidinone 5'-phosphate (DARP), formate and pyrophosphate.</text>
</comment>
<comment type="catalytic activity">
    <reaction evidence="1">
        <text>GTP + 4 H2O = 2,5-diamino-6-hydroxy-4-(5-phosphoribosylamino)-pyrimidine + formate + 2 phosphate + 3 H(+)</text>
        <dbReference type="Rhea" id="RHEA:23704"/>
        <dbReference type="ChEBI" id="CHEBI:15377"/>
        <dbReference type="ChEBI" id="CHEBI:15378"/>
        <dbReference type="ChEBI" id="CHEBI:15740"/>
        <dbReference type="ChEBI" id="CHEBI:37565"/>
        <dbReference type="ChEBI" id="CHEBI:43474"/>
        <dbReference type="ChEBI" id="CHEBI:58614"/>
        <dbReference type="EC" id="3.5.4.25"/>
    </reaction>
</comment>
<comment type="cofactor">
    <cofactor evidence="1">
        <name>Zn(2+)</name>
        <dbReference type="ChEBI" id="CHEBI:29105"/>
    </cofactor>
    <text evidence="1">Binds 1 zinc ion per subunit.</text>
</comment>
<comment type="pathway">
    <text evidence="1">Cofactor biosynthesis; riboflavin biosynthesis; 5-amino-6-(D-ribitylamino)uracil from GTP: step 1/4.</text>
</comment>
<comment type="subunit">
    <text evidence="1">Homodimer.</text>
</comment>
<comment type="similarity">
    <text evidence="1">Belongs to the GTP cyclohydrolase II family.</text>
</comment>
<organism>
    <name type="scientific">Citrobacter koseri (strain ATCC BAA-895 / CDC 4225-83 / SGSC4696)</name>
    <dbReference type="NCBI Taxonomy" id="290338"/>
    <lineage>
        <taxon>Bacteria</taxon>
        <taxon>Pseudomonadati</taxon>
        <taxon>Pseudomonadota</taxon>
        <taxon>Gammaproteobacteria</taxon>
        <taxon>Enterobacterales</taxon>
        <taxon>Enterobacteriaceae</taxon>
        <taxon>Citrobacter</taxon>
    </lineage>
</organism>
<protein>
    <recommendedName>
        <fullName evidence="1">GTP cyclohydrolase-2</fullName>
        <ecNumber evidence="1">3.5.4.25</ecNumber>
    </recommendedName>
    <alternativeName>
        <fullName evidence="1">GTP cyclohydrolase II</fullName>
    </alternativeName>
</protein>